<evidence type="ECO:0000256" key="1">
    <source>
        <dbReference type="SAM" id="MobiDB-lite"/>
    </source>
</evidence>
<evidence type="ECO:0000269" key="2">
    <source>
    </source>
</evidence>
<evidence type="ECO:0000305" key="3"/>
<evidence type="ECO:0007744" key="4">
    <source>
    </source>
</evidence>
<evidence type="ECO:0007744" key="5">
    <source>
    </source>
</evidence>
<evidence type="ECO:0007744" key="6">
    <source>
    </source>
</evidence>
<accession>P53897</accession>
<accession>D6W126</accession>
<feature type="chain" id="PRO_0000203416" description="mRNA stability protein IGO1">
    <location>
        <begin position="1"/>
        <end position="168"/>
    </location>
</feature>
<feature type="region of interest" description="Disordered" evidence="1">
    <location>
        <begin position="1"/>
        <end position="31"/>
    </location>
</feature>
<feature type="region of interest" description="Disordered" evidence="1">
    <location>
        <begin position="125"/>
        <end position="168"/>
    </location>
</feature>
<feature type="compositionally biased region" description="Low complexity" evidence="1">
    <location>
        <begin position="1"/>
        <end position="13"/>
    </location>
</feature>
<feature type="compositionally biased region" description="Polar residues" evidence="1">
    <location>
        <begin position="17"/>
        <end position="31"/>
    </location>
</feature>
<feature type="compositionally biased region" description="Low complexity" evidence="1">
    <location>
        <begin position="127"/>
        <end position="139"/>
    </location>
</feature>
<feature type="compositionally biased region" description="Low complexity" evidence="1">
    <location>
        <begin position="146"/>
        <end position="168"/>
    </location>
</feature>
<feature type="modified residue" description="Phosphoserine" evidence="5">
    <location>
        <position position="32"/>
    </location>
</feature>
<feature type="modified residue" description="Phosphoserine" evidence="2 4 6">
    <location>
        <position position="64"/>
    </location>
</feature>
<sequence>MSNENLSPNSSNPDLTKLNNGESGTIDTSKFSPNEMKLYKMYGKLPSKKDIFKHTMQKRKYFDSGDYALQKAGIQNNDPINYGKNNLPLTNPSKLREDIIKRRISTCPSTASTAGVVDNATLIQKEGSISSGPPSSNNGTIGGGSTSSTPVGNHSSSSSSLYTESPIR</sequence>
<dbReference type="EMBL" id="X92517">
    <property type="protein sequence ID" value="CAA63282.1"/>
    <property type="molecule type" value="Genomic_DNA"/>
</dbReference>
<dbReference type="EMBL" id="Z71433">
    <property type="protein sequence ID" value="CAA96044.1"/>
    <property type="molecule type" value="Genomic_DNA"/>
</dbReference>
<dbReference type="EMBL" id="AY558004">
    <property type="protein sequence ID" value="AAS56330.1"/>
    <property type="molecule type" value="Genomic_DNA"/>
</dbReference>
<dbReference type="EMBL" id="BK006947">
    <property type="protein sequence ID" value="DAA10392.1"/>
    <property type="molecule type" value="Genomic_DNA"/>
</dbReference>
<dbReference type="PIR" id="S60970">
    <property type="entry name" value="S60970"/>
</dbReference>
<dbReference type="RefSeq" id="NP_014242.1">
    <property type="nucleotide sequence ID" value="NM_001182995.1"/>
</dbReference>
<dbReference type="SMR" id="P53897"/>
<dbReference type="BioGRID" id="35672">
    <property type="interactions" value="75"/>
</dbReference>
<dbReference type="DIP" id="DIP-2011N"/>
<dbReference type="FunCoup" id="P53897">
    <property type="interactions" value="84"/>
</dbReference>
<dbReference type="IntAct" id="P53897">
    <property type="interactions" value="12"/>
</dbReference>
<dbReference type="MINT" id="P53897"/>
<dbReference type="STRING" id="4932.YNL157W"/>
<dbReference type="iPTMnet" id="P53897"/>
<dbReference type="PaxDb" id="4932-YNL157W"/>
<dbReference type="PeptideAtlas" id="P53897"/>
<dbReference type="EnsemblFungi" id="YNL157W_mRNA">
    <property type="protein sequence ID" value="YNL157W"/>
    <property type="gene ID" value="YNL157W"/>
</dbReference>
<dbReference type="GeneID" id="855565"/>
<dbReference type="KEGG" id="sce:YNL157W"/>
<dbReference type="AGR" id="SGD:S000005101"/>
<dbReference type="SGD" id="S000005101">
    <property type="gene designation" value="IGO1"/>
</dbReference>
<dbReference type="VEuPathDB" id="FungiDB:YNL157W"/>
<dbReference type="eggNOG" id="KOG4076">
    <property type="taxonomic scope" value="Eukaryota"/>
</dbReference>
<dbReference type="GeneTree" id="ENSGT00940000174856"/>
<dbReference type="HOGENOM" id="CLU_135184_0_0_1"/>
<dbReference type="InParanoid" id="P53897"/>
<dbReference type="OrthoDB" id="5949865at2759"/>
<dbReference type="BioCyc" id="YEAST:G3O-33173-MONOMER"/>
<dbReference type="Reactome" id="R-SCE-2465910">
    <property type="pathway name" value="MASTL Facilitates Mitotic Progression"/>
</dbReference>
<dbReference type="BioGRID-ORCS" id="855565">
    <property type="hits" value="0 hits in 10 CRISPR screens"/>
</dbReference>
<dbReference type="PRO" id="PR:P53897"/>
<dbReference type="Proteomes" id="UP000002311">
    <property type="component" value="Chromosome XIV"/>
</dbReference>
<dbReference type="RNAct" id="P53897">
    <property type="molecule type" value="protein"/>
</dbReference>
<dbReference type="GO" id="GO:0005737">
    <property type="term" value="C:cytoplasm"/>
    <property type="evidence" value="ECO:0007005"/>
    <property type="project" value="SGD"/>
</dbReference>
<dbReference type="GO" id="GO:0005634">
    <property type="term" value="C:nucleus"/>
    <property type="evidence" value="ECO:0000314"/>
    <property type="project" value="SGD"/>
</dbReference>
<dbReference type="GO" id="GO:0000932">
    <property type="term" value="C:P-body"/>
    <property type="evidence" value="ECO:0000314"/>
    <property type="project" value="SGD"/>
</dbReference>
<dbReference type="GO" id="GO:0004864">
    <property type="term" value="F:protein phosphatase inhibitor activity"/>
    <property type="evidence" value="ECO:0000318"/>
    <property type="project" value="GO_Central"/>
</dbReference>
<dbReference type="GO" id="GO:0004865">
    <property type="term" value="F:protein serine/threonine phosphatase inhibitor activity"/>
    <property type="evidence" value="ECO:0000314"/>
    <property type="project" value="SGD"/>
</dbReference>
<dbReference type="GO" id="GO:0048255">
    <property type="term" value="P:mRNA stabilization"/>
    <property type="evidence" value="ECO:0000316"/>
    <property type="project" value="SGD"/>
</dbReference>
<dbReference type="GO" id="GO:1900152">
    <property type="term" value="P:negative regulation of nuclear-transcribed mRNA catabolic process, deadenylation-dependent decay"/>
    <property type="evidence" value="ECO:0000316"/>
    <property type="project" value="SGD"/>
</dbReference>
<dbReference type="GO" id="GO:1903452">
    <property type="term" value="P:positive regulation of G1 to G0 transition"/>
    <property type="evidence" value="ECO:0000316"/>
    <property type="project" value="SGD"/>
</dbReference>
<dbReference type="GO" id="GO:1901992">
    <property type="term" value="P:positive regulation of mitotic cell cycle phase transition"/>
    <property type="evidence" value="ECO:0000316"/>
    <property type="project" value="SGD"/>
</dbReference>
<dbReference type="InterPro" id="IPR006760">
    <property type="entry name" value="Endosulphine"/>
</dbReference>
<dbReference type="PANTHER" id="PTHR10358">
    <property type="entry name" value="ENDOSULFINE"/>
    <property type="match status" value="1"/>
</dbReference>
<dbReference type="PANTHER" id="PTHR10358:SF6">
    <property type="entry name" value="ENDOSULFINE, ISOFORM A"/>
    <property type="match status" value="1"/>
</dbReference>
<dbReference type="Pfam" id="PF04667">
    <property type="entry name" value="Endosulfine"/>
    <property type="match status" value="1"/>
</dbReference>
<reference key="1">
    <citation type="journal article" date="1996" name="Yeast">
        <title>The sequence of 36.8 kb from the left arm of chromosome XIV reveals 24 complete open reading frames: 18 correspond to new genes, one of which encodes a protein similar to the human myotonic dystrophy kinase.</title>
        <authorList>
            <person name="Nasr F."/>
            <person name="Becam A.-M."/>
            <person name="Herbert C.J."/>
        </authorList>
    </citation>
    <scope>NUCLEOTIDE SEQUENCE [GENOMIC DNA]</scope>
    <source>
        <strain>ATCC 96604 / S288c / FY1679</strain>
    </source>
</reference>
<reference key="2">
    <citation type="journal article" date="1997" name="Nature">
        <title>The nucleotide sequence of Saccharomyces cerevisiae chromosome XIV and its evolutionary implications.</title>
        <authorList>
            <person name="Philippsen P."/>
            <person name="Kleine K."/>
            <person name="Poehlmann R."/>
            <person name="Duesterhoeft A."/>
            <person name="Hamberg K."/>
            <person name="Hegemann J.H."/>
            <person name="Obermaier B."/>
            <person name="Urrestarazu L.A."/>
            <person name="Aert R."/>
            <person name="Albermann K."/>
            <person name="Altmann R."/>
            <person name="Andre B."/>
            <person name="Baladron V."/>
            <person name="Ballesta J.P.G."/>
            <person name="Becam A.-M."/>
            <person name="Beinhauer J.D."/>
            <person name="Boskovic J."/>
            <person name="Buitrago M.J."/>
            <person name="Bussereau F."/>
            <person name="Coster F."/>
            <person name="Crouzet M."/>
            <person name="D'Angelo M."/>
            <person name="Dal Pero F."/>
            <person name="De Antoni A."/>
            <person name="del Rey F."/>
            <person name="Doignon F."/>
            <person name="Domdey H."/>
            <person name="Dubois E."/>
            <person name="Fiedler T.A."/>
            <person name="Fleig U."/>
            <person name="Floeth M."/>
            <person name="Fritz C."/>
            <person name="Gaillardin C."/>
            <person name="Garcia-Cantalejo J.M."/>
            <person name="Glansdorff N."/>
            <person name="Goffeau A."/>
            <person name="Gueldener U."/>
            <person name="Herbert C.J."/>
            <person name="Heumann K."/>
            <person name="Heuss-Neitzel D."/>
            <person name="Hilbert H."/>
            <person name="Hinni K."/>
            <person name="Iraqui Houssaini I."/>
            <person name="Jacquet M."/>
            <person name="Jimenez A."/>
            <person name="Jonniaux J.-L."/>
            <person name="Karpfinger-Hartl L."/>
            <person name="Lanfranchi G."/>
            <person name="Lepingle A."/>
            <person name="Levesque H."/>
            <person name="Lyck R."/>
            <person name="Maftahi M."/>
            <person name="Mallet L."/>
            <person name="Maurer C.T.C."/>
            <person name="Messenguy F."/>
            <person name="Mewes H.-W."/>
            <person name="Moestl D."/>
            <person name="Nasr F."/>
            <person name="Nicaud J.-M."/>
            <person name="Niedenthal R.K."/>
            <person name="Pandolfo D."/>
            <person name="Pierard A."/>
            <person name="Piravandi E."/>
            <person name="Planta R.J."/>
            <person name="Pohl T.M."/>
            <person name="Purnelle B."/>
            <person name="Rebischung C."/>
            <person name="Remacha M.A."/>
            <person name="Revuelta J.L."/>
            <person name="Rinke M."/>
            <person name="Saiz J.E."/>
            <person name="Sartorello F."/>
            <person name="Scherens B."/>
            <person name="Sen-Gupta M."/>
            <person name="Soler-Mira A."/>
            <person name="Urbanus J.H.M."/>
            <person name="Valle G."/>
            <person name="Van Dyck L."/>
            <person name="Verhasselt P."/>
            <person name="Vierendeels F."/>
            <person name="Vissers S."/>
            <person name="Voet M."/>
            <person name="Volckaert G."/>
            <person name="Wach A."/>
            <person name="Wambutt R."/>
            <person name="Wedler H."/>
            <person name="Zollner A."/>
            <person name="Hani J."/>
        </authorList>
    </citation>
    <scope>NUCLEOTIDE SEQUENCE [LARGE SCALE GENOMIC DNA]</scope>
    <source>
        <strain>ATCC 204508 / S288c</strain>
    </source>
</reference>
<reference key="3">
    <citation type="journal article" date="2014" name="G3 (Bethesda)">
        <title>The reference genome sequence of Saccharomyces cerevisiae: Then and now.</title>
        <authorList>
            <person name="Engel S.R."/>
            <person name="Dietrich F.S."/>
            <person name="Fisk D.G."/>
            <person name="Binkley G."/>
            <person name="Balakrishnan R."/>
            <person name="Costanzo M.C."/>
            <person name="Dwight S.S."/>
            <person name="Hitz B.C."/>
            <person name="Karra K."/>
            <person name="Nash R.S."/>
            <person name="Weng S."/>
            <person name="Wong E.D."/>
            <person name="Lloyd P."/>
            <person name="Skrzypek M.S."/>
            <person name="Miyasato S.R."/>
            <person name="Simison M."/>
            <person name="Cherry J.M."/>
        </authorList>
    </citation>
    <scope>GENOME REANNOTATION</scope>
    <source>
        <strain>ATCC 204508 / S288c</strain>
    </source>
</reference>
<reference key="4">
    <citation type="journal article" date="2007" name="Genome Res.">
        <title>Approaching a complete repository of sequence-verified protein-encoding clones for Saccharomyces cerevisiae.</title>
        <authorList>
            <person name="Hu Y."/>
            <person name="Rolfs A."/>
            <person name="Bhullar B."/>
            <person name="Murthy T.V.S."/>
            <person name="Zhu C."/>
            <person name="Berger M.F."/>
            <person name="Camargo A.A."/>
            <person name="Kelley F."/>
            <person name="McCarron S."/>
            <person name="Jepson D."/>
            <person name="Richardson A."/>
            <person name="Raphael J."/>
            <person name="Moreira D."/>
            <person name="Taycher E."/>
            <person name="Zuo D."/>
            <person name="Mohr S."/>
            <person name="Kane M.F."/>
            <person name="Williamson J."/>
            <person name="Simpson A.J.G."/>
            <person name="Bulyk M.L."/>
            <person name="Harlow E."/>
            <person name="Marsischky G."/>
            <person name="Kolodner R.D."/>
            <person name="LaBaer J."/>
        </authorList>
    </citation>
    <scope>NUCLEOTIDE SEQUENCE [GENOMIC DNA]</scope>
    <source>
        <strain>ATCC 204508 / S288c</strain>
    </source>
</reference>
<reference key="5">
    <citation type="journal article" date="2007" name="J. Proteome Res.">
        <title>Large-scale phosphorylation analysis of alpha-factor-arrested Saccharomyces cerevisiae.</title>
        <authorList>
            <person name="Li X."/>
            <person name="Gerber S.A."/>
            <person name="Rudner A.D."/>
            <person name="Beausoleil S.A."/>
            <person name="Haas W."/>
            <person name="Villen J."/>
            <person name="Elias J.E."/>
            <person name="Gygi S.P."/>
        </authorList>
    </citation>
    <scope>PHOSPHORYLATION [LARGE SCALE ANALYSIS] AT SER-64</scope>
    <scope>IDENTIFICATION BY MASS SPECTROMETRY [LARGE SCALE ANALYSIS]</scope>
    <source>
        <strain>ADR376</strain>
    </source>
</reference>
<reference key="6">
    <citation type="journal article" date="2008" name="Mol. Cell. Proteomics">
        <title>A multidimensional chromatography technology for in-depth phosphoproteome analysis.</title>
        <authorList>
            <person name="Albuquerque C.P."/>
            <person name="Smolka M.B."/>
            <person name="Payne S.H."/>
            <person name="Bafna V."/>
            <person name="Eng J."/>
            <person name="Zhou H."/>
        </authorList>
    </citation>
    <scope>PHOSPHORYLATION [LARGE SCALE ANALYSIS] AT SER-32</scope>
    <scope>IDENTIFICATION BY MASS SPECTROMETRY [LARGE SCALE ANALYSIS]</scope>
</reference>
<reference key="7">
    <citation type="journal article" date="2009" name="Science">
        <title>Global analysis of Cdk1 substrate phosphorylation sites provides insights into evolution.</title>
        <authorList>
            <person name="Holt L.J."/>
            <person name="Tuch B.B."/>
            <person name="Villen J."/>
            <person name="Johnson A.D."/>
            <person name="Gygi S.P."/>
            <person name="Morgan D.O."/>
        </authorList>
    </citation>
    <scope>PHOSPHORYLATION [LARGE SCALE ANALYSIS] AT SER-64</scope>
    <scope>IDENTIFICATION BY MASS SPECTROMETRY [LARGE SCALE ANALYSIS]</scope>
</reference>
<reference key="8">
    <citation type="journal article" date="2010" name="Mol. Cell">
        <title>Initiation of the TORC1-regulated G0 program requires Igo1/2, which license specific mRNAs to evade degradation via the 5'-3' mRNA decay pathway.</title>
        <authorList>
            <person name="Talarek N."/>
            <person name="Cameroni E."/>
            <person name="Jaquenoud M."/>
            <person name="Luo X."/>
            <person name="Bontron S."/>
            <person name="Lippman S."/>
            <person name="Devgan G."/>
            <person name="Snyder M."/>
            <person name="Broach J.R."/>
            <person name="De Virgilio C."/>
        </authorList>
    </citation>
    <scope>INTERACTION WITH RIM15; DHH1; PBP1; PBP4 AND LSM12</scope>
    <scope>PHOSPHORYLATION AT SER-64</scope>
    <scope>FUNCTION</scope>
</reference>
<organism>
    <name type="scientific">Saccharomyces cerevisiae (strain ATCC 204508 / S288c)</name>
    <name type="common">Baker's yeast</name>
    <dbReference type="NCBI Taxonomy" id="559292"/>
    <lineage>
        <taxon>Eukaryota</taxon>
        <taxon>Fungi</taxon>
        <taxon>Dikarya</taxon>
        <taxon>Ascomycota</taxon>
        <taxon>Saccharomycotina</taxon>
        <taxon>Saccharomycetes</taxon>
        <taxon>Saccharomycetales</taxon>
        <taxon>Saccharomycetaceae</taxon>
        <taxon>Saccharomyces</taxon>
    </lineage>
</organism>
<gene>
    <name type="primary">IGO1</name>
    <name type="ordered locus">YNL157W</name>
    <name type="ORF">N1743</name>
</gene>
<comment type="function">
    <text evidence="2">Required for TORC1 to properly control gene expression and chronological life span. Plays an essential role in initiation of the G0 program by preventing the degradation of specific nutrient-regulated mRNAs via the 5'-3' mRNA decay pathway.</text>
</comment>
<comment type="subunit">
    <text evidence="2">Interacts with RIM15, DHH1, PBP1, PBP4 and LSM12.</text>
</comment>
<comment type="PTM">
    <text evidence="2">Phosphorylated at Ser-64 by RIM15.</text>
</comment>
<comment type="similarity">
    <text evidence="3">Belongs to the endosulfine family.</text>
</comment>
<keyword id="KW-0597">Phosphoprotein</keyword>
<keyword id="KW-1185">Reference proteome</keyword>
<name>IGO1_YEAST</name>
<proteinExistence type="evidence at protein level"/>
<protein>
    <recommendedName>
        <fullName>mRNA stability protein IGO1</fullName>
    </recommendedName>
    <alternativeName>
        <fullName>Initiation of G zero protein 1</fullName>
    </alternativeName>
</protein>